<organism>
    <name type="scientific">Methylorubrum extorquens (strain ATCC 14718 / DSM 1338 / JCM 2805 / NCIMB 9133 / AM1)</name>
    <name type="common">Methylobacterium extorquens</name>
    <dbReference type="NCBI Taxonomy" id="272630"/>
    <lineage>
        <taxon>Bacteria</taxon>
        <taxon>Pseudomonadati</taxon>
        <taxon>Pseudomonadota</taxon>
        <taxon>Alphaproteobacteria</taxon>
        <taxon>Hyphomicrobiales</taxon>
        <taxon>Methylobacteriaceae</taxon>
        <taxon>Methylorubrum</taxon>
    </lineage>
</organism>
<dbReference type="EMBL" id="AF287907">
    <property type="protein sequence ID" value="AAK11534.1"/>
    <property type="molecule type" value="Genomic_DNA"/>
</dbReference>
<dbReference type="EMBL" id="CP001510">
    <property type="protein sequence ID" value="ACS41407.1"/>
    <property type="molecule type" value="Genomic_DNA"/>
</dbReference>
<dbReference type="RefSeq" id="WP_003601373.1">
    <property type="nucleotide sequence ID" value="NC_012808.1"/>
</dbReference>
<dbReference type="SMR" id="Q9APJ2"/>
<dbReference type="STRING" id="272630.MexAM1_META1p3696"/>
<dbReference type="GeneID" id="96602163"/>
<dbReference type="KEGG" id="mea:Mex_1p3696"/>
<dbReference type="eggNOG" id="COG0333">
    <property type="taxonomic scope" value="Bacteria"/>
</dbReference>
<dbReference type="HOGENOM" id="CLU_129084_2_2_5"/>
<dbReference type="OrthoDB" id="9801927at2"/>
<dbReference type="Proteomes" id="UP000009081">
    <property type="component" value="Chromosome"/>
</dbReference>
<dbReference type="GO" id="GO:0015934">
    <property type="term" value="C:large ribosomal subunit"/>
    <property type="evidence" value="ECO:0007669"/>
    <property type="project" value="InterPro"/>
</dbReference>
<dbReference type="GO" id="GO:0003735">
    <property type="term" value="F:structural constituent of ribosome"/>
    <property type="evidence" value="ECO:0007669"/>
    <property type="project" value="InterPro"/>
</dbReference>
<dbReference type="GO" id="GO:0006412">
    <property type="term" value="P:translation"/>
    <property type="evidence" value="ECO:0007669"/>
    <property type="project" value="UniProtKB-UniRule"/>
</dbReference>
<dbReference type="Gene3D" id="1.20.5.640">
    <property type="entry name" value="Single helix bin"/>
    <property type="match status" value="1"/>
</dbReference>
<dbReference type="HAMAP" id="MF_00340">
    <property type="entry name" value="Ribosomal_bL32"/>
    <property type="match status" value="1"/>
</dbReference>
<dbReference type="InterPro" id="IPR002677">
    <property type="entry name" value="Ribosomal_bL32"/>
</dbReference>
<dbReference type="InterPro" id="IPR044957">
    <property type="entry name" value="Ribosomal_bL32_bact"/>
</dbReference>
<dbReference type="InterPro" id="IPR011332">
    <property type="entry name" value="Ribosomal_zn-bd"/>
</dbReference>
<dbReference type="NCBIfam" id="TIGR01031">
    <property type="entry name" value="rpmF_bact"/>
    <property type="match status" value="1"/>
</dbReference>
<dbReference type="PANTHER" id="PTHR35534">
    <property type="entry name" value="50S RIBOSOMAL PROTEIN L32"/>
    <property type="match status" value="1"/>
</dbReference>
<dbReference type="PANTHER" id="PTHR35534:SF1">
    <property type="entry name" value="LARGE RIBOSOMAL SUBUNIT PROTEIN BL32"/>
    <property type="match status" value="1"/>
</dbReference>
<dbReference type="Pfam" id="PF01783">
    <property type="entry name" value="Ribosomal_L32p"/>
    <property type="match status" value="1"/>
</dbReference>
<dbReference type="SUPFAM" id="SSF57829">
    <property type="entry name" value="Zn-binding ribosomal proteins"/>
    <property type="match status" value="1"/>
</dbReference>
<evidence type="ECO:0000255" key="1">
    <source>
        <dbReference type="HAMAP-Rule" id="MF_00340"/>
    </source>
</evidence>
<evidence type="ECO:0000256" key="2">
    <source>
        <dbReference type="SAM" id="MobiDB-lite"/>
    </source>
</evidence>
<evidence type="ECO:0000305" key="3"/>
<feature type="chain" id="PRO_0000172363" description="Large ribosomal subunit protein bL32">
    <location>
        <begin position="1"/>
        <end position="62"/>
    </location>
</feature>
<feature type="region of interest" description="Disordered" evidence="2">
    <location>
        <begin position="1"/>
        <end position="44"/>
    </location>
</feature>
<feature type="compositionally biased region" description="Basic residues" evidence="2">
    <location>
        <begin position="1"/>
        <end position="16"/>
    </location>
</feature>
<feature type="compositionally biased region" description="Basic and acidic residues" evidence="2">
    <location>
        <begin position="28"/>
        <end position="44"/>
    </location>
</feature>
<keyword id="KW-1185">Reference proteome</keyword>
<keyword id="KW-0687">Ribonucleoprotein</keyword>
<keyword id="KW-0689">Ribosomal protein</keyword>
<protein>
    <recommendedName>
        <fullName evidence="1">Large ribosomal subunit protein bL32</fullName>
    </recommendedName>
    <alternativeName>
        <fullName evidence="3">50S ribosomal protein L32</fullName>
    </alternativeName>
</protein>
<accession>Q9APJ2</accession>
<accession>C5AZN3</accession>
<proteinExistence type="inferred from homology"/>
<reference key="1">
    <citation type="journal article" date="2001" name="J. Bacteriol.">
        <title>Connection between poly-beta-hydroxybutyrate biosynthesis and growth on C1 and C2 compounds in the methylotroph Methylobacterium extorquens AM1.</title>
        <authorList>
            <person name="Korotkova N."/>
            <person name="Lidstrom M.E."/>
        </authorList>
    </citation>
    <scope>NUCLEOTIDE SEQUENCE [GENOMIC DNA]</scope>
</reference>
<reference key="2">
    <citation type="journal article" date="2009" name="PLoS ONE">
        <title>Methylobacterium genome sequences: a reference blueprint to investigate microbial metabolism of C1 compounds from natural and industrial sources.</title>
        <authorList>
            <person name="Vuilleumier S."/>
            <person name="Chistoserdova L."/>
            <person name="Lee M.-C."/>
            <person name="Bringel F."/>
            <person name="Lajus A."/>
            <person name="Zhou Y."/>
            <person name="Gourion B."/>
            <person name="Barbe V."/>
            <person name="Chang J."/>
            <person name="Cruveiller S."/>
            <person name="Dossat C."/>
            <person name="Gillett W."/>
            <person name="Gruffaz C."/>
            <person name="Haugen E."/>
            <person name="Hourcade E."/>
            <person name="Levy R."/>
            <person name="Mangenot S."/>
            <person name="Muller E."/>
            <person name="Nadalig T."/>
            <person name="Pagni M."/>
            <person name="Penny C."/>
            <person name="Peyraud R."/>
            <person name="Robinson D.G."/>
            <person name="Roche D."/>
            <person name="Rouy Z."/>
            <person name="Saenampechek C."/>
            <person name="Salvignol G."/>
            <person name="Vallenet D."/>
            <person name="Wu Z."/>
            <person name="Marx C.J."/>
            <person name="Vorholt J.A."/>
            <person name="Olson M.V."/>
            <person name="Kaul R."/>
            <person name="Weissenbach J."/>
            <person name="Medigue C."/>
            <person name="Lidstrom M.E."/>
        </authorList>
    </citation>
    <scope>NUCLEOTIDE SEQUENCE [LARGE SCALE GENOMIC DNA]</scope>
    <source>
        <strain>ATCC 14718 / DSM 1338 / JCM 2805 / NCIMB 9133 / AM1</strain>
    </source>
</reference>
<gene>
    <name evidence="1" type="primary">rpmF</name>
    <name type="ordered locus">MexAM1_META1p3696</name>
</gene>
<sequence length="62" mass="7035">MAVPKRKTSPSRRGMRRSADALKAPTYVEDKDSGELRRPHHIDLKTGMYRGRQVLKVKSAEA</sequence>
<name>RL32_METEA</name>
<comment type="similarity">
    <text evidence="1">Belongs to the bacterial ribosomal protein bL32 family.</text>
</comment>